<evidence type="ECO:0000250" key="1"/>
<evidence type="ECO:0000255" key="2"/>
<evidence type="ECO:0000256" key="3">
    <source>
        <dbReference type="SAM" id="MobiDB-lite"/>
    </source>
</evidence>
<evidence type="ECO:0000269" key="4">
    <source>
    </source>
</evidence>
<evidence type="ECO:0000305" key="5">
    <source>
    </source>
</evidence>
<name>PF36P_PLAYO</name>
<comment type="function">
    <text evidence="5">Involved in sporozoite infection of hepatocytes and replication therein.</text>
</comment>
<comment type="subcellular location">
    <subcellularLocation>
        <location evidence="1">Cell surface</location>
    </subcellularLocation>
    <subcellularLocation>
        <location evidence="1">Cell membrane</location>
        <topology evidence="1">Lipid-anchor</topology>
        <topology evidence="1">GPI-anchor</topology>
    </subcellularLocation>
    <text evidence="1">Present on the surface of sporozoites.</text>
</comment>
<comment type="disruption phenotype">
    <text evidence="4">Cells lacking both P36 and P52/P36P show attenuated infection and do not form a parasitophorous vacuole within hepatocytes.</text>
</comment>
<reference key="1">
    <citation type="journal article" date="2001" name="Mol. Biochem. Parasitol.">
        <title>Comparative genomics in Plasmodium: a tool for the identification of genes and functional analysis.</title>
        <authorList>
            <person name="Thompson J."/>
            <person name="Janse C.J."/>
            <person name="Waters A.P."/>
        </authorList>
    </citation>
    <scope>NUCLEOTIDE SEQUENCE [GENOMIC DNA]</scope>
    <source>
        <strain>17XNL</strain>
    </source>
</reference>
<reference key="2">
    <citation type="journal article" date="2002" name="Nature">
        <title>Genome sequence and comparative analysis of the model rodent malaria parasite Plasmodium yoelii yoelii.</title>
        <authorList>
            <person name="Carlton J.M."/>
            <person name="Angiuoli S.V."/>
            <person name="Suh B.B."/>
            <person name="Kooij T.W."/>
            <person name="Pertea M."/>
            <person name="Silva J.C."/>
            <person name="Ermolaeva M.D."/>
            <person name="Allen J.E."/>
            <person name="Selengut J.D."/>
            <person name="Koo H.L."/>
            <person name="Peterson J.D."/>
            <person name="Pop M."/>
            <person name="Kosack D.S."/>
            <person name="Shumway M.F."/>
            <person name="Bidwell S.L."/>
            <person name="Shallom S.J."/>
            <person name="van Aken S.E."/>
            <person name="Riedmuller S.B."/>
            <person name="Feldblyum T.V."/>
            <person name="Cho J.K."/>
            <person name="Quackenbush J."/>
            <person name="Sedegah M."/>
            <person name="Shoaibi A."/>
            <person name="Cummings L.M."/>
            <person name="Florens L."/>
            <person name="Yates J.R. III"/>
            <person name="Raine J.D."/>
            <person name="Sinden R.E."/>
            <person name="Harris M.A."/>
            <person name="Cunningham D.A."/>
            <person name="Preiser P.R."/>
            <person name="Bergman L.W."/>
            <person name="Vaidya A.B."/>
            <person name="van Lin L.H."/>
            <person name="Janse C.J."/>
            <person name="Waters A.P."/>
            <person name="Smith H.O."/>
            <person name="White O.R."/>
            <person name="Salzberg S.L."/>
            <person name="Venter J.C."/>
            <person name="Fraser C.M."/>
            <person name="Hoffman S.L."/>
            <person name="Gardner M.J."/>
            <person name="Carucci D.J."/>
        </authorList>
    </citation>
    <scope>NUCLEOTIDE SEQUENCE [LARGE SCALE GENOMIC DNA]</scope>
    <source>
        <strain>17XNL</strain>
    </source>
</reference>
<reference key="3">
    <citation type="journal article" date="2007" name="Infect. Immun.">
        <title>Plasmodium yoelii sporozoites with simultaneous deletion of P52 and P36 are completely attenuated and confer sterile immunity against infection.</title>
        <authorList>
            <person name="Labaied M."/>
            <person name="Harupa A."/>
            <person name="Dumpit R.F."/>
            <person name="Coppens I."/>
            <person name="Mikolajczak S.A."/>
            <person name="Kappe S.H."/>
        </authorList>
    </citation>
    <scope>FUNCTION</scope>
    <scope>DISRUPTION PHENOTYPE</scope>
</reference>
<proteinExistence type="inferred from homology"/>
<dbReference type="EMBL" id="AY034178">
    <property type="protein sequence ID" value="AAK56487.1"/>
    <property type="molecule type" value="Genomic_DNA"/>
</dbReference>
<dbReference type="EMBL" id="AABL01000353">
    <property type="protein sequence ID" value="EAA20643.1"/>
    <property type="molecule type" value="Genomic_DNA"/>
</dbReference>
<dbReference type="SMR" id="Q7K5V2"/>
<dbReference type="DIP" id="DIP-61877N"/>
<dbReference type="FunCoup" id="Q7K5V2">
    <property type="interactions" value="675"/>
</dbReference>
<dbReference type="STRING" id="73239.Q7K5V2"/>
<dbReference type="GlyCosmos" id="Q7K5V2">
    <property type="glycosylation" value="12 sites, No reported glycans"/>
</dbReference>
<dbReference type="PaxDb" id="73239-Q7K5V2"/>
<dbReference type="EnsemblProtists" id="EAA20643">
    <property type="protein sequence ID" value="EAA20643"/>
    <property type="gene ID" value="EAA20643"/>
</dbReference>
<dbReference type="KEGG" id="pyo:PY17X_1003600"/>
<dbReference type="InParanoid" id="Q7K5V2"/>
<dbReference type="Proteomes" id="UP000008553">
    <property type="component" value="Unassembled WGS sequence"/>
</dbReference>
<dbReference type="GO" id="GO:0009986">
    <property type="term" value="C:cell surface"/>
    <property type="evidence" value="ECO:0007669"/>
    <property type="project" value="UniProtKB-SubCell"/>
</dbReference>
<dbReference type="GO" id="GO:0005886">
    <property type="term" value="C:plasma membrane"/>
    <property type="evidence" value="ECO:0007669"/>
    <property type="project" value="UniProtKB-SubCell"/>
</dbReference>
<dbReference type="GO" id="GO:0098552">
    <property type="term" value="C:side of membrane"/>
    <property type="evidence" value="ECO:0007669"/>
    <property type="project" value="UniProtKB-KW"/>
</dbReference>
<dbReference type="Gene3D" id="2.60.40.2860">
    <property type="match status" value="2"/>
</dbReference>
<dbReference type="InterPro" id="IPR010884">
    <property type="entry name" value="6_CYS_dom"/>
</dbReference>
<dbReference type="InterPro" id="IPR038160">
    <property type="entry name" value="6_CYS_dom_sf"/>
</dbReference>
<dbReference type="Pfam" id="PF07422">
    <property type="entry name" value="s48_45"/>
    <property type="match status" value="1"/>
</dbReference>
<dbReference type="SMART" id="SM00970">
    <property type="entry name" value="s48_45"/>
    <property type="match status" value="1"/>
</dbReference>
<dbReference type="PROSITE" id="PS51701">
    <property type="entry name" value="6_CYS"/>
    <property type="match status" value="2"/>
</dbReference>
<organism>
    <name type="scientific">Plasmodium yoelii yoelii</name>
    <dbReference type="NCBI Taxonomy" id="73239"/>
    <lineage>
        <taxon>Eukaryota</taxon>
        <taxon>Sar</taxon>
        <taxon>Alveolata</taxon>
        <taxon>Apicomplexa</taxon>
        <taxon>Aconoidasida</taxon>
        <taxon>Haemosporida</taxon>
        <taxon>Plasmodiidae</taxon>
        <taxon>Plasmodium</taxon>
        <taxon>Plasmodium (Vinckeia)</taxon>
    </lineage>
</organism>
<sequence length="480" mass="55658">MKRRSIFMYYCFCFLLKYVAFSNVPNPNTTIGHFEICEVNTSSGDAEECVLENEFGKMFLFICDIDYNEMSKNIVLPSECAKKTYIDHVNPNGTSPEVNTYDIFPDLIAANESQFRDKFYFYGTPYSSKDIDFICLCFSETKPDIKHVMKMSFKKMTKKIKGCDFGDNIPTKKDLTNGKALYENSSCHIYAYPGDVIGINCYKKDINNIYNNNLELQPNNCFHNVYYEDDILLSSKNLIPNSRVIPDPSNDVKLSKMHSYMSYIILPDEINENVKISCACKRDEYIGTMFLYVNTSKNILTSPDNNVEEIAPLNDHYISIGDMWDMGLHENPEQIQGIISNHANKKYYEHMKIYKSNKMDSSDDDESNETESSENESNERTHNGNRANKDANNSEKMTGNRRKKNNSINNTNYYSNYEDDNGINISTHDKYYEDQHFGNNGPLRKKRTFWQNMFGTSSSYYEVFNYFSIAFILIIHMLLL</sequence>
<protein>
    <recommendedName>
        <fullName>Sporozoite surface protein P36p</fullName>
    </recommendedName>
    <alternativeName>
        <fullName>Sporozoite surface protein P52</fullName>
    </alternativeName>
</protein>
<accession>Q7K5V2</accession>
<keyword id="KW-1003">Cell membrane</keyword>
<keyword id="KW-1015">Disulfide bond</keyword>
<keyword id="KW-0325">Glycoprotein</keyword>
<keyword id="KW-0336">GPI-anchor</keyword>
<keyword id="KW-0449">Lipoprotein</keyword>
<keyword id="KW-0461">Malaria</keyword>
<keyword id="KW-0472">Membrane</keyword>
<keyword id="KW-1185">Reference proteome</keyword>
<keyword id="KW-0677">Repeat</keyword>
<keyword id="KW-0732">Signal</keyword>
<feature type="signal peptide" evidence="2">
    <location>
        <begin position="1"/>
        <end position="22"/>
    </location>
</feature>
<feature type="chain" id="PRO_0000423577" description="Sporozoite surface protein P36p">
    <location>
        <begin position="23"/>
        <end position="457"/>
    </location>
</feature>
<feature type="propeptide" id="PRO_0000423578" description="Removed in mature form" evidence="2">
    <location>
        <begin position="458"/>
        <end position="480"/>
    </location>
</feature>
<feature type="domain" description="6-Cys 1">
    <location>
        <begin position="23"/>
        <end position="156"/>
    </location>
</feature>
<feature type="domain" description="6-Cys 2">
    <location>
        <begin position="159"/>
        <end position="298"/>
    </location>
</feature>
<feature type="region of interest" description="Disordered" evidence="3">
    <location>
        <begin position="358"/>
        <end position="415"/>
    </location>
</feature>
<feature type="compositionally biased region" description="Acidic residues" evidence="3">
    <location>
        <begin position="362"/>
        <end position="376"/>
    </location>
</feature>
<feature type="compositionally biased region" description="Basic and acidic residues" evidence="3">
    <location>
        <begin position="377"/>
        <end position="393"/>
    </location>
</feature>
<feature type="compositionally biased region" description="Low complexity" evidence="3">
    <location>
        <begin position="406"/>
        <end position="415"/>
    </location>
</feature>
<feature type="lipid moiety-binding region" description="GPI-anchor amidated serine" evidence="2">
    <location>
        <position position="457"/>
    </location>
</feature>
<feature type="glycosylation site" description="N-linked (GlcNAc...) asparagine" evidence="2">
    <location>
        <position position="28"/>
    </location>
</feature>
<feature type="glycosylation site" description="N-linked (GlcNAc...) asparagine" evidence="2">
    <location>
        <position position="40"/>
    </location>
</feature>
<feature type="glycosylation site" description="N-linked (GlcNAc...) asparagine" evidence="2">
    <location>
        <position position="92"/>
    </location>
</feature>
<feature type="glycosylation site" description="N-linked (GlcNAc...) asparagine" evidence="2">
    <location>
        <position position="111"/>
    </location>
</feature>
<feature type="glycosylation site" description="N-linked (GlcNAc...) asparagine" evidence="2">
    <location>
        <position position="184"/>
    </location>
</feature>
<feature type="glycosylation site" description="N-linked (GlcNAc...) asparagine" evidence="2">
    <location>
        <position position="294"/>
    </location>
</feature>
<feature type="glycosylation site" description="N-linked (GlcNAc...) asparagine" evidence="2">
    <location>
        <position position="368"/>
    </location>
</feature>
<feature type="glycosylation site" description="N-linked (GlcNAc...) asparagine" evidence="2">
    <location>
        <position position="375"/>
    </location>
</feature>
<feature type="glycosylation site" description="N-linked (GlcNAc...) asparagine" evidence="2">
    <location>
        <position position="392"/>
    </location>
</feature>
<feature type="glycosylation site" description="N-linked (GlcNAc...) asparagine" evidence="2">
    <location>
        <position position="405"/>
    </location>
</feature>
<feature type="glycosylation site" description="N-linked (GlcNAc...) asparagine" evidence="2">
    <location>
        <position position="409"/>
    </location>
</feature>
<feature type="glycosylation site" description="N-linked (GlcNAc...) asparagine" evidence="2">
    <location>
        <position position="424"/>
    </location>
</feature>
<feature type="disulfide bond" evidence="1">
    <location>
        <begin position="37"/>
        <end position="49"/>
    </location>
</feature>
<feature type="disulfide bond" evidence="1">
    <location>
        <begin position="63"/>
        <end position="137"/>
    </location>
</feature>
<feature type="disulfide bond" evidence="1">
    <location>
        <begin position="80"/>
        <end position="135"/>
    </location>
</feature>
<feature type="disulfide bond" evidence="1">
    <location>
        <begin position="163"/>
        <end position="187"/>
    </location>
</feature>
<feature type="disulfide bond" evidence="1">
    <location>
        <begin position="201"/>
        <end position="280"/>
    </location>
</feature>
<feature type="disulfide bond" evidence="1">
    <location>
        <begin position="221"/>
        <end position="278"/>
    </location>
</feature>
<gene>
    <name type="primary">P52</name>
    <name type="synonym">P36P</name>
    <name type="ORF">PY01340</name>
</gene>